<keyword id="KW-0520">NAD</keyword>
<keyword id="KW-0560">Oxidoreductase</keyword>
<keyword id="KW-1185">Reference proteome</keyword>
<name>Y388_MYCLE</name>
<feature type="chain" id="PRO_0000093784" description="Uncharacterized oxidoreductase ML0388">
    <location>
        <begin position="1"/>
        <end position="375"/>
    </location>
</feature>
<dbReference type="EC" id="1.-.-.-"/>
<dbReference type="EMBL" id="U00015">
    <property type="protein sequence ID" value="AAC43221.1"/>
    <property type="molecule type" value="Genomic_DNA"/>
</dbReference>
<dbReference type="EMBL" id="AL583918">
    <property type="protein sequence ID" value="CAC29896.1"/>
    <property type="status" value="ALT_INIT"/>
    <property type="molecule type" value="Genomic_DNA"/>
</dbReference>
<dbReference type="PIR" id="D86957">
    <property type="entry name" value="D86957"/>
</dbReference>
<dbReference type="PIR" id="S72812">
    <property type="entry name" value="S72812"/>
</dbReference>
<dbReference type="RefSeq" id="WP_041322396.1">
    <property type="nucleotide sequence ID" value="NC_002677.1"/>
</dbReference>
<dbReference type="SMR" id="Q49721"/>
<dbReference type="STRING" id="272631.gene:17574207"/>
<dbReference type="KEGG" id="mle:ML0388"/>
<dbReference type="Leproma" id="ML0388"/>
<dbReference type="eggNOG" id="COG0516">
    <property type="taxonomic scope" value="Bacteria"/>
</dbReference>
<dbReference type="HOGENOM" id="CLU_064068_0_0_11"/>
<dbReference type="Proteomes" id="UP000000806">
    <property type="component" value="Chromosome"/>
</dbReference>
<dbReference type="GO" id="GO:0003938">
    <property type="term" value="F:IMP dehydrogenase activity"/>
    <property type="evidence" value="ECO:0007669"/>
    <property type="project" value="InterPro"/>
</dbReference>
<dbReference type="GO" id="GO:0006183">
    <property type="term" value="P:GTP biosynthetic process"/>
    <property type="evidence" value="ECO:0007669"/>
    <property type="project" value="TreeGrafter"/>
</dbReference>
<dbReference type="FunFam" id="3.20.20.70:FF:000060">
    <property type="entry name" value="IMP dehydrogenase subunit"/>
    <property type="match status" value="1"/>
</dbReference>
<dbReference type="Gene3D" id="3.20.20.70">
    <property type="entry name" value="Aldolase class I"/>
    <property type="match status" value="1"/>
</dbReference>
<dbReference type="InterPro" id="IPR013785">
    <property type="entry name" value="Aldolase_TIM"/>
</dbReference>
<dbReference type="InterPro" id="IPR005990">
    <property type="entry name" value="IMP_DH"/>
</dbReference>
<dbReference type="InterPro" id="IPR005992">
    <property type="entry name" value="IMP_DH-rel2"/>
</dbReference>
<dbReference type="InterPro" id="IPR001093">
    <property type="entry name" value="IMP_DH_GMPRt"/>
</dbReference>
<dbReference type="NCBIfam" id="TIGR01304">
    <property type="entry name" value="IMP_DH_rel_2"/>
    <property type="match status" value="1"/>
</dbReference>
<dbReference type="PANTHER" id="PTHR11911:SF111">
    <property type="entry name" value="INOSINE-5'-MONOPHOSPHATE DEHYDROGENASE"/>
    <property type="match status" value="1"/>
</dbReference>
<dbReference type="PANTHER" id="PTHR11911">
    <property type="entry name" value="INOSINE-5-MONOPHOSPHATE DEHYDROGENASE RELATED"/>
    <property type="match status" value="1"/>
</dbReference>
<dbReference type="Pfam" id="PF00478">
    <property type="entry name" value="IMPDH"/>
    <property type="match status" value="1"/>
</dbReference>
<dbReference type="SMART" id="SM01240">
    <property type="entry name" value="IMPDH"/>
    <property type="match status" value="1"/>
</dbReference>
<dbReference type="SUPFAM" id="SSF51412">
    <property type="entry name" value="Inosine monophosphate dehydrogenase (IMPDH)"/>
    <property type="match status" value="1"/>
</dbReference>
<comment type="similarity">
    <text evidence="1">Belongs to the IMPDH/GMPR family.</text>
</comment>
<comment type="sequence caution" evidence="1">
    <conflict type="erroneous initiation">
        <sequence resource="EMBL-CDS" id="CAC29896"/>
    </conflict>
</comment>
<reference key="1">
    <citation type="submission" date="1994-03" db="EMBL/GenBank/DDBJ databases">
        <authorList>
            <person name="Smith D.R."/>
            <person name="Robison K."/>
        </authorList>
    </citation>
    <scope>NUCLEOTIDE SEQUENCE [GENOMIC DNA]</scope>
</reference>
<reference key="2">
    <citation type="journal article" date="2001" name="Nature">
        <title>Massive gene decay in the leprosy bacillus.</title>
        <authorList>
            <person name="Cole S.T."/>
            <person name="Eiglmeier K."/>
            <person name="Parkhill J."/>
            <person name="James K.D."/>
            <person name="Thomson N.R."/>
            <person name="Wheeler P.R."/>
            <person name="Honore N."/>
            <person name="Garnier T."/>
            <person name="Churcher C.M."/>
            <person name="Harris D.E."/>
            <person name="Mungall K.L."/>
            <person name="Basham D."/>
            <person name="Brown D."/>
            <person name="Chillingworth T."/>
            <person name="Connor R."/>
            <person name="Davies R.M."/>
            <person name="Devlin K."/>
            <person name="Duthoy S."/>
            <person name="Feltwell T."/>
            <person name="Fraser A."/>
            <person name="Hamlin N."/>
            <person name="Holroyd S."/>
            <person name="Hornsby T."/>
            <person name="Jagels K."/>
            <person name="Lacroix C."/>
            <person name="Maclean J."/>
            <person name="Moule S."/>
            <person name="Murphy L.D."/>
            <person name="Oliver K."/>
            <person name="Quail M.A."/>
            <person name="Rajandream M.A."/>
            <person name="Rutherford K.M."/>
            <person name="Rutter S."/>
            <person name="Seeger K."/>
            <person name="Simon S."/>
            <person name="Simmonds M."/>
            <person name="Skelton J."/>
            <person name="Squares R."/>
            <person name="Squares S."/>
            <person name="Stevens K."/>
            <person name="Taylor K."/>
            <person name="Whitehead S."/>
            <person name="Woodward J.R."/>
            <person name="Barrell B.G."/>
        </authorList>
    </citation>
    <scope>NUCLEOTIDE SEQUENCE [LARGE SCALE GENOMIC DNA]</scope>
    <source>
        <strain>TN</strain>
    </source>
</reference>
<proteinExistence type="inferred from homology"/>
<gene>
    <name type="ordered locus">ML0388</name>
    <name type="ORF">B1620_C2_193</name>
</gene>
<organism>
    <name type="scientific">Mycobacterium leprae (strain TN)</name>
    <dbReference type="NCBI Taxonomy" id="272631"/>
    <lineage>
        <taxon>Bacteria</taxon>
        <taxon>Bacillati</taxon>
        <taxon>Actinomycetota</taxon>
        <taxon>Actinomycetes</taxon>
        <taxon>Mycobacteriales</taxon>
        <taxon>Mycobacteriaceae</taxon>
        <taxon>Mycobacterium</taxon>
    </lineage>
</organism>
<protein>
    <recommendedName>
        <fullName>Uncharacterized oxidoreductase ML0388</fullName>
        <ecNumber>1.-.-.-</ecNumber>
    </recommendedName>
</protein>
<evidence type="ECO:0000305" key="1"/>
<sequence length="375" mass="38924">MVEIGMGRVARRTYELREISIVPSRRTRSSKDVSTAWQLDAYRFEIPVVAHPTDALVSPEFAIELGRLGGLGVLNGEGLIGRHADVGAKVAQLIEAAEKEPEPATAVCLLQELHAAPLNPDLLGSAVARIREAGVTTAVRVSPQNAQVLTPVLLAAGIDLLVVQGSIVSAECVASGGEPLNLKTFISELDVPVVAGGVLDHRTALHLMRTGAAGVIVGYGSTRGATTSDEVLGISVPMATAIADAAAARREYLDETGGRYVHVLADGDIYTSGELAKAIACGADAVVLGTPLAQSAEALGGGWFWPAAAAHPSLPRGALLQTAVGERPSLQQVLNGPSDNPFGTLNLVGGLRRSMAKAGYCDLKEFQKVGLIVSI</sequence>
<accession>Q49721</accession>
<accession>Q9CCV2</accession>